<evidence type="ECO:0000255" key="1">
    <source>
        <dbReference type="HAMAP-Rule" id="MF_00262"/>
    </source>
</evidence>
<dbReference type="EMBL" id="BA000045">
    <property type="protein sequence ID" value="BAC89935.1"/>
    <property type="molecule type" value="Genomic_DNA"/>
</dbReference>
<dbReference type="RefSeq" id="NP_924940.1">
    <property type="nucleotide sequence ID" value="NC_005125.1"/>
</dbReference>
<dbReference type="RefSeq" id="WP_011141992.1">
    <property type="nucleotide sequence ID" value="NC_005125.1"/>
</dbReference>
<dbReference type="SMR" id="Q7NJ38"/>
<dbReference type="STRING" id="251221.gene:10759486"/>
<dbReference type="EnsemblBacteria" id="BAC89935">
    <property type="protein sequence ID" value="BAC89935"/>
    <property type="gene ID" value="BAC89935"/>
</dbReference>
<dbReference type="KEGG" id="gvi:gsr1994"/>
<dbReference type="PATRIC" id="fig|251221.4.peg.2026"/>
<dbReference type="eggNOG" id="COG0851">
    <property type="taxonomic scope" value="Bacteria"/>
</dbReference>
<dbReference type="HOGENOM" id="CLU_137929_1_1_3"/>
<dbReference type="InParanoid" id="Q7NJ38"/>
<dbReference type="OrthoDB" id="9796578at2"/>
<dbReference type="PhylomeDB" id="Q7NJ38"/>
<dbReference type="Proteomes" id="UP000000557">
    <property type="component" value="Chromosome"/>
</dbReference>
<dbReference type="GO" id="GO:0005886">
    <property type="term" value="C:plasma membrane"/>
    <property type="evidence" value="ECO:0000318"/>
    <property type="project" value="GO_Central"/>
</dbReference>
<dbReference type="GO" id="GO:0000918">
    <property type="term" value="P:division septum site selection"/>
    <property type="evidence" value="ECO:0000318"/>
    <property type="project" value="GO_Central"/>
</dbReference>
<dbReference type="GO" id="GO:0032955">
    <property type="term" value="P:regulation of division septum assembly"/>
    <property type="evidence" value="ECO:0007669"/>
    <property type="project" value="InterPro"/>
</dbReference>
<dbReference type="Gene3D" id="3.30.1070.10">
    <property type="entry name" value="Cell division topological specificity factor MinE"/>
    <property type="match status" value="1"/>
</dbReference>
<dbReference type="HAMAP" id="MF_00262">
    <property type="entry name" value="MinE"/>
    <property type="match status" value="1"/>
</dbReference>
<dbReference type="InterPro" id="IPR005527">
    <property type="entry name" value="MinE"/>
</dbReference>
<dbReference type="InterPro" id="IPR036707">
    <property type="entry name" value="MinE_sf"/>
</dbReference>
<dbReference type="NCBIfam" id="TIGR01215">
    <property type="entry name" value="minE"/>
    <property type="match status" value="1"/>
</dbReference>
<dbReference type="Pfam" id="PF03776">
    <property type="entry name" value="MinE"/>
    <property type="match status" value="1"/>
</dbReference>
<dbReference type="SUPFAM" id="SSF55229">
    <property type="entry name" value="Cell division protein MinE topological specificity domain"/>
    <property type="match status" value="1"/>
</dbReference>
<proteinExistence type="inferred from homology"/>
<comment type="function">
    <text evidence="1">Prevents the cell division inhibition by proteins MinC and MinD at internal division sites while permitting inhibition at polar sites. This ensures cell division at the proper site by restricting the formation of a division septum at the midpoint of the long axis of the cell.</text>
</comment>
<comment type="similarity">
    <text evidence="1">Belongs to the MinE family.</text>
</comment>
<gene>
    <name evidence="1" type="primary">minE</name>
    <name type="ordered locus">gsr1994</name>
</gene>
<feature type="chain" id="PRO_0000298121" description="Cell division topological specificity factor">
    <location>
        <begin position="1"/>
        <end position="91"/>
    </location>
</feature>
<organism>
    <name type="scientific">Gloeobacter violaceus (strain ATCC 29082 / PCC 7421)</name>
    <dbReference type="NCBI Taxonomy" id="251221"/>
    <lineage>
        <taxon>Bacteria</taxon>
        <taxon>Bacillati</taxon>
        <taxon>Cyanobacteriota</taxon>
        <taxon>Cyanophyceae</taxon>
        <taxon>Gloeobacterales</taxon>
        <taxon>Gloeobacteraceae</taxon>
        <taxon>Gloeobacter</taxon>
    </lineage>
</organism>
<protein>
    <recommendedName>
        <fullName evidence="1">Cell division topological specificity factor</fullName>
    </recommendedName>
</protein>
<name>MINE_GLOVI</name>
<reference key="1">
    <citation type="journal article" date="2003" name="DNA Res.">
        <title>Complete genome structure of Gloeobacter violaceus PCC 7421, a cyanobacterium that lacks thylakoids.</title>
        <authorList>
            <person name="Nakamura Y."/>
            <person name="Kaneko T."/>
            <person name="Sato S."/>
            <person name="Mimuro M."/>
            <person name="Miyashita H."/>
            <person name="Tsuchiya T."/>
            <person name="Sasamoto S."/>
            <person name="Watanabe A."/>
            <person name="Kawashima K."/>
            <person name="Kishida Y."/>
            <person name="Kiyokawa C."/>
            <person name="Kohara M."/>
            <person name="Matsumoto M."/>
            <person name="Matsuno A."/>
            <person name="Nakazaki N."/>
            <person name="Shimpo S."/>
            <person name="Takeuchi C."/>
            <person name="Yamada M."/>
            <person name="Tabata S."/>
        </authorList>
    </citation>
    <scope>NUCLEOTIDE SEQUENCE [LARGE SCALE GENOMIC DNA]</scope>
    <source>
        <strain>ATCC 29082 / PCC 7421</strain>
    </source>
</reference>
<accession>Q7NJ38</accession>
<sequence>MVFDLLERLFNRNKTGSATVAKDRLKMVLAVDRTEIAPQTIEQIRKEILDVIVRYFEIDENEKFDVTLERERGSTAIIANVPIRRIRPEHI</sequence>
<keyword id="KW-0131">Cell cycle</keyword>
<keyword id="KW-0132">Cell division</keyword>
<keyword id="KW-1185">Reference proteome</keyword>